<proteinExistence type="evidence at protein level"/>
<accession>Q08554</accession>
<accession>Q9HB01</accession>
<protein>
    <recommendedName>
        <fullName>Desmocollin-1</fullName>
    </recommendedName>
    <alternativeName>
        <fullName>Cadherin family member 1</fullName>
    </alternativeName>
    <alternativeName>
        <fullName>Desmosomal glycoprotein 2/3</fullName>
        <shortName>DG2/DG3</shortName>
    </alternativeName>
</protein>
<dbReference type="EMBL" id="Z34522">
    <property type="protein sequence ID" value="CAA84279.1"/>
    <property type="molecule type" value="mRNA"/>
</dbReference>
<dbReference type="EMBL" id="Z34522">
    <property type="protein sequence ID" value="CAA84278.1"/>
    <property type="molecule type" value="mRNA"/>
</dbReference>
<dbReference type="EMBL" id="X72925">
    <property type="protein sequence ID" value="CAA51428.1"/>
    <property type="molecule type" value="mRNA"/>
</dbReference>
<dbReference type="EMBL" id="X72925">
    <property type="protein sequence ID" value="CAA51429.1"/>
    <property type="molecule type" value="mRNA"/>
</dbReference>
<dbReference type="EMBL" id="AF293358">
    <property type="protein sequence ID" value="AAG23424.1"/>
    <property type="molecule type" value="Genomic_DNA"/>
</dbReference>
<dbReference type="EMBL" id="CH471088">
    <property type="protein sequence ID" value="EAX01252.1"/>
    <property type="molecule type" value="Genomic_DNA"/>
</dbReference>
<dbReference type="CCDS" id="CCDS11894.1">
    <molecule id="Q08554-1"/>
</dbReference>
<dbReference type="CCDS" id="CCDS11895.1">
    <molecule id="Q08554-2"/>
</dbReference>
<dbReference type="PIR" id="A48910">
    <property type="entry name" value="A48910"/>
</dbReference>
<dbReference type="PIR" id="I37281">
    <property type="entry name" value="I37281"/>
</dbReference>
<dbReference type="PIR" id="I37282">
    <property type="entry name" value="I37282"/>
</dbReference>
<dbReference type="RefSeq" id="NP_004939.1">
    <molecule id="Q08554-2"/>
    <property type="nucleotide sequence ID" value="NM_004948.3"/>
</dbReference>
<dbReference type="RefSeq" id="NP_077739.1">
    <molecule id="Q08554-1"/>
    <property type="nucleotide sequence ID" value="NM_024421.2"/>
</dbReference>
<dbReference type="PDB" id="5IRY">
    <property type="method" value="X-ray"/>
    <property type="resolution" value="3.10 A"/>
    <property type="chains" value="A/B=135-676"/>
</dbReference>
<dbReference type="PDBsum" id="5IRY"/>
<dbReference type="SMR" id="Q08554"/>
<dbReference type="BioGRID" id="108157">
    <property type="interactions" value="151"/>
</dbReference>
<dbReference type="FunCoup" id="Q08554">
    <property type="interactions" value="437"/>
</dbReference>
<dbReference type="IntAct" id="Q08554">
    <property type="interactions" value="35"/>
</dbReference>
<dbReference type="MINT" id="Q08554"/>
<dbReference type="STRING" id="9606.ENSP00000257198"/>
<dbReference type="GlyCosmos" id="Q08554">
    <property type="glycosylation" value="2 sites, No reported glycans"/>
</dbReference>
<dbReference type="GlyGen" id="Q08554">
    <property type="glycosylation" value="9 sites, 1 O-linked glycan (1 site)"/>
</dbReference>
<dbReference type="iPTMnet" id="Q08554"/>
<dbReference type="PhosphoSitePlus" id="Q08554"/>
<dbReference type="SwissPalm" id="Q08554"/>
<dbReference type="BioMuta" id="DSC1"/>
<dbReference type="DMDM" id="223590198"/>
<dbReference type="jPOST" id="Q08554"/>
<dbReference type="MassIVE" id="Q08554"/>
<dbReference type="PaxDb" id="9606-ENSP00000257198"/>
<dbReference type="PeptideAtlas" id="Q08554"/>
<dbReference type="ProteomicsDB" id="58632">
    <molecule id="Q08554-1"/>
</dbReference>
<dbReference type="ProteomicsDB" id="58633">
    <molecule id="Q08554-2"/>
</dbReference>
<dbReference type="Antibodypedia" id="2439">
    <property type="antibodies" value="229 antibodies from 28 providers"/>
</dbReference>
<dbReference type="DNASU" id="1823"/>
<dbReference type="Ensembl" id="ENST00000257197.7">
    <molecule id="Q08554-2"/>
    <property type="protein sequence ID" value="ENSP00000257197.3"/>
    <property type="gene ID" value="ENSG00000134765.10"/>
</dbReference>
<dbReference type="Ensembl" id="ENST00000257198.6">
    <molecule id="Q08554-1"/>
    <property type="protein sequence ID" value="ENSP00000257198.6"/>
    <property type="gene ID" value="ENSG00000134765.10"/>
</dbReference>
<dbReference type="GeneID" id="1823"/>
<dbReference type="KEGG" id="hsa:1823"/>
<dbReference type="MANE-Select" id="ENST00000257198.6">
    <property type="protein sequence ID" value="ENSP00000257198.6"/>
    <property type="RefSeq nucleotide sequence ID" value="NM_024421.2"/>
    <property type="RefSeq protein sequence ID" value="NP_077739.1"/>
</dbReference>
<dbReference type="UCSC" id="uc002kwn.4">
    <molecule id="Q08554-1"/>
    <property type="organism name" value="human"/>
</dbReference>
<dbReference type="AGR" id="HGNC:3035"/>
<dbReference type="CTD" id="1823"/>
<dbReference type="DisGeNET" id="1823"/>
<dbReference type="GeneCards" id="DSC1"/>
<dbReference type="HGNC" id="HGNC:3035">
    <property type="gene designation" value="DSC1"/>
</dbReference>
<dbReference type="HPA" id="ENSG00000134765">
    <property type="expression patterns" value="Tissue enriched (skin)"/>
</dbReference>
<dbReference type="MIM" id="125643">
    <property type="type" value="gene"/>
</dbReference>
<dbReference type="neXtProt" id="NX_Q08554"/>
<dbReference type="OpenTargets" id="ENSG00000134765"/>
<dbReference type="PharmGKB" id="PA27488"/>
<dbReference type="VEuPathDB" id="HostDB:ENSG00000134765"/>
<dbReference type="eggNOG" id="KOG3594">
    <property type="taxonomic scope" value="Eukaryota"/>
</dbReference>
<dbReference type="GeneTree" id="ENSGT01030000234624"/>
<dbReference type="HOGENOM" id="CLU_005284_0_2_1"/>
<dbReference type="InParanoid" id="Q08554"/>
<dbReference type="OMA" id="VTICRHE"/>
<dbReference type="OrthoDB" id="6079678at2759"/>
<dbReference type="PAN-GO" id="Q08554">
    <property type="GO annotations" value="3 GO annotations based on evolutionary models"/>
</dbReference>
<dbReference type="PhylomeDB" id="Q08554"/>
<dbReference type="TreeFam" id="TF316817"/>
<dbReference type="PathwayCommons" id="Q08554"/>
<dbReference type="Reactome" id="R-HSA-6798695">
    <property type="pathway name" value="Neutrophil degranulation"/>
</dbReference>
<dbReference type="Reactome" id="R-HSA-6805567">
    <property type="pathway name" value="Keratinization"/>
</dbReference>
<dbReference type="Reactome" id="R-HSA-6809371">
    <property type="pathway name" value="Formation of the cornified envelope"/>
</dbReference>
<dbReference type="SignaLink" id="Q08554"/>
<dbReference type="BioGRID-ORCS" id="1823">
    <property type="hits" value="9 hits in 1135 CRISPR screens"/>
</dbReference>
<dbReference type="CD-CODE" id="232F8A39">
    <property type="entry name" value="P-body"/>
</dbReference>
<dbReference type="ChiTaRS" id="DSC1">
    <property type="organism name" value="human"/>
</dbReference>
<dbReference type="GeneWiki" id="DSC1"/>
<dbReference type="GenomeRNAi" id="1823"/>
<dbReference type="Pharos" id="Q08554">
    <property type="development level" value="Tbio"/>
</dbReference>
<dbReference type="PRO" id="PR:Q08554"/>
<dbReference type="Proteomes" id="UP000005640">
    <property type="component" value="Chromosome 18"/>
</dbReference>
<dbReference type="RNAct" id="Q08554">
    <property type="molecule type" value="protein"/>
</dbReference>
<dbReference type="Bgee" id="ENSG00000134765">
    <property type="expression patterns" value="Expressed in upper leg skin and 66 other cell types or tissues"/>
</dbReference>
<dbReference type="ExpressionAtlas" id="Q08554">
    <property type="expression patterns" value="baseline and differential"/>
</dbReference>
<dbReference type="GO" id="GO:0001533">
    <property type="term" value="C:cornified envelope"/>
    <property type="evidence" value="ECO:0000304"/>
    <property type="project" value="Reactome"/>
</dbReference>
<dbReference type="GO" id="GO:0030057">
    <property type="term" value="C:desmosome"/>
    <property type="evidence" value="ECO:0000318"/>
    <property type="project" value="GO_Central"/>
</dbReference>
<dbReference type="GO" id="GO:0070062">
    <property type="term" value="C:extracellular exosome"/>
    <property type="evidence" value="ECO:0007005"/>
    <property type="project" value="UniProtKB"/>
</dbReference>
<dbReference type="GO" id="GO:0101003">
    <property type="term" value="C:ficolin-1-rich granule membrane"/>
    <property type="evidence" value="ECO:0000304"/>
    <property type="project" value="Reactome"/>
</dbReference>
<dbReference type="GO" id="GO:0005921">
    <property type="term" value="C:gap junction"/>
    <property type="evidence" value="ECO:0000304"/>
    <property type="project" value="ProtInc"/>
</dbReference>
<dbReference type="GO" id="GO:0016020">
    <property type="term" value="C:membrane"/>
    <property type="evidence" value="ECO:0000304"/>
    <property type="project" value="ProtInc"/>
</dbReference>
<dbReference type="GO" id="GO:0005886">
    <property type="term" value="C:plasma membrane"/>
    <property type="evidence" value="ECO:0000304"/>
    <property type="project" value="Reactome"/>
</dbReference>
<dbReference type="GO" id="GO:0005509">
    <property type="term" value="F:calcium ion binding"/>
    <property type="evidence" value="ECO:0000318"/>
    <property type="project" value="GO_Central"/>
</dbReference>
<dbReference type="GO" id="GO:0098609">
    <property type="term" value="P:cell-cell adhesion"/>
    <property type="evidence" value="ECO:0000318"/>
    <property type="project" value="GO_Central"/>
</dbReference>
<dbReference type="GO" id="GO:0002160">
    <property type="term" value="P:desmosome maintenance"/>
    <property type="evidence" value="ECO:0000250"/>
    <property type="project" value="UniProtKB"/>
</dbReference>
<dbReference type="GO" id="GO:0061436">
    <property type="term" value="P:establishment of skin barrier"/>
    <property type="evidence" value="ECO:0000250"/>
    <property type="project" value="UniProtKB"/>
</dbReference>
<dbReference type="GO" id="GO:0031069">
    <property type="term" value="P:hair follicle morphogenesis"/>
    <property type="evidence" value="ECO:0000250"/>
    <property type="project" value="UniProtKB"/>
</dbReference>
<dbReference type="GO" id="GO:0007156">
    <property type="term" value="P:homophilic cell adhesion via plasma membrane adhesion molecules"/>
    <property type="evidence" value="ECO:0007669"/>
    <property type="project" value="InterPro"/>
</dbReference>
<dbReference type="GO" id="GO:0050680">
    <property type="term" value="P:negative regulation of epithelial cell proliferation"/>
    <property type="evidence" value="ECO:0000250"/>
    <property type="project" value="UniProtKB"/>
</dbReference>
<dbReference type="CDD" id="cd11304">
    <property type="entry name" value="Cadherin_repeat"/>
    <property type="match status" value="4"/>
</dbReference>
<dbReference type="FunFam" id="2.60.40.60:FF:000011">
    <property type="entry name" value="Cadherin 1"/>
    <property type="match status" value="1"/>
</dbReference>
<dbReference type="FunFam" id="2.60.40.60:FF:000019">
    <property type="entry name" value="Cadherin 2"/>
    <property type="match status" value="1"/>
</dbReference>
<dbReference type="FunFam" id="2.60.40.60:FF:000027">
    <property type="entry name" value="Cadherin 2"/>
    <property type="match status" value="1"/>
</dbReference>
<dbReference type="FunFam" id="2.60.40.60:FF:000031">
    <property type="entry name" value="Cadherin 3"/>
    <property type="match status" value="1"/>
</dbReference>
<dbReference type="FunFam" id="2.60.40.60:FF:000091">
    <property type="entry name" value="Desmocollin 1"/>
    <property type="match status" value="1"/>
</dbReference>
<dbReference type="FunFam" id="2.60.40.60:FF:000096">
    <property type="entry name" value="Desmocollin 2"/>
    <property type="match status" value="1"/>
</dbReference>
<dbReference type="FunFam" id="4.10.900.10:FF:000005">
    <property type="entry name" value="Desmocollin 2"/>
    <property type="match status" value="1"/>
</dbReference>
<dbReference type="Gene3D" id="2.60.40.60">
    <property type="entry name" value="Cadherins"/>
    <property type="match status" value="6"/>
</dbReference>
<dbReference type="Gene3D" id="4.10.900.10">
    <property type="entry name" value="TCF3-CBD (Catenin binding domain)"/>
    <property type="match status" value="1"/>
</dbReference>
<dbReference type="InterPro" id="IPR050971">
    <property type="entry name" value="Cadherin-domain_protein"/>
</dbReference>
<dbReference type="InterPro" id="IPR002126">
    <property type="entry name" value="Cadherin-like_dom"/>
</dbReference>
<dbReference type="InterPro" id="IPR015919">
    <property type="entry name" value="Cadherin-like_sf"/>
</dbReference>
<dbReference type="InterPro" id="IPR020894">
    <property type="entry name" value="Cadherin_CS"/>
</dbReference>
<dbReference type="InterPro" id="IPR014868">
    <property type="entry name" value="Cadherin_pro_dom"/>
</dbReference>
<dbReference type="InterPro" id="IPR027397">
    <property type="entry name" value="Catenin-bd_sf"/>
</dbReference>
<dbReference type="InterPro" id="IPR009122">
    <property type="entry name" value="Desmosomal_cadherin"/>
</dbReference>
<dbReference type="PANTHER" id="PTHR24025:SF8">
    <property type="entry name" value="DESMOCOLLIN-1"/>
    <property type="match status" value="1"/>
</dbReference>
<dbReference type="PANTHER" id="PTHR24025">
    <property type="entry name" value="DESMOGLEIN FAMILY MEMBER"/>
    <property type="match status" value="1"/>
</dbReference>
<dbReference type="Pfam" id="PF00028">
    <property type="entry name" value="Cadherin"/>
    <property type="match status" value="4"/>
</dbReference>
<dbReference type="Pfam" id="PF08758">
    <property type="entry name" value="Cadherin_pro"/>
    <property type="match status" value="1"/>
</dbReference>
<dbReference type="PRINTS" id="PR00205">
    <property type="entry name" value="CADHERIN"/>
</dbReference>
<dbReference type="PRINTS" id="PR01818">
    <property type="entry name" value="DESMOCADHERN"/>
</dbReference>
<dbReference type="PRINTS" id="PR01820">
    <property type="entry name" value="DESMOCOLLIN"/>
</dbReference>
<dbReference type="SMART" id="SM00112">
    <property type="entry name" value="CA"/>
    <property type="match status" value="5"/>
</dbReference>
<dbReference type="SMART" id="SM01055">
    <property type="entry name" value="Cadherin_pro"/>
    <property type="match status" value="1"/>
</dbReference>
<dbReference type="SUPFAM" id="SSF49313">
    <property type="entry name" value="Cadherin-like"/>
    <property type="match status" value="6"/>
</dbReference>
<dbReference type="PROSITE" id="PS00232">
    <property type="entry name" value="CADHERIN_1"/>
    <property type="match status" value="3"/>
</dbReference>
<dbReference type="PROSITE" id="PS50268">
    <property type="entry name" value="CADHERIN_2"/>
    <property type="match status" value="5"/>
</dbReference>
<evidence type="ECO:0000250" key="1"/>
<evidence type="ECO:0000250" key="2">
    <source>
        <dbReference type="UniProtKB" id="P55849"/>
    </source>
</evidence>
<evidence type="ECO:0000255" key="3"/>
<evidence type="ECO:0000255" key="4">
    <source>
        <dbReference type="PROSITE-ProRule" id="PRU00043"/>
    </source>
</evidence>
<evidence type="ECO:0000269" key="5">
    <source>
    </source>
</evidence>
<evidence type="ECO:0000269" key="6">
    <source>
    </source>
</evidence>
<evidence type="ECO:0000269" key="7">
    <source>
    </source>
</evidence>
<evidence type="ECO:0000303" key="8">
    <source>
    </source>
</evidence>
<evidence type="ECO:0000303" key="9">
    <source>
    </source>
</evidence>
<evidence type="ECO:0000305" key="10"/>
<evidence type="ECO:0007744" key="11">
    <source>
    </source>
</evidence>
<evidence type="ECO:0007829" key="12">
    <source>
        <dbReference type="PDB" id="5IRY"/>
    </source>
</evidence>
<feature type="signal peptide" evidence="3">
    <location>
        <begin position="1"/>
        <end position="29"/>
    </location>
</feature>
<feature type="propeptide" id="PRO_0000003863" evidence="3">
    <location>
        <begin position="30"/>
        <end position="134"/>
    </location>
</feature>
<feature type="chain" id="PRO_0000003864" description="Desmocollin-1">
    <location>
        <begin position="135"/>
        <end position="894"/>
    </location>
</feature>
<feature type="topological domain" description="Extracellular" evidence="3">
    <location>
        <begin position="135"/>
        <end position="691"/>
    </location>
</feature>
<feature type="transmembrane region" description="Helical" evidence="3">
    <location>
        <begin position="692"/>
        <end position="714"/>
    </location>
</feature>
<feature type="topological domain" description="Cytoplasmic" evidence="3">
    <location>
        <begin position="715"/>
        <end position="894"/>
    </location>
</feature>
<feature type="domain" description="Cadherin 1" evidence="4">
    <location>
        <begin position="135"/>
        <end position="242"/>
    </location>
</feature>
<feature type="domain" description="Cadherin 2" evidence="4">
    <location>
        <begin position="243"/>
        <end position="354"/>
    </location>
</feature>
<feature type="domain" description="Cadherin 3" evidence="4">
    <location>
        <begin position="355"/>
        <end position="471"/>
    </location>
</feature>
<feature type="domain" description="Cadherin 4" evidence="4">
    <location>
        <begin position="472"/>
        <end position="575"/>
    </location>
</feature>
<feature type="domain" description="Cadherin 5" evidence="4">
    <location>
        <begin position="576"/>
        <end position="682"/>
    </location>
</feature>
<feature type="modified residue" description="Phosphothreonine" evidence="11">
    <location>
        <position position="385"/>
    </location>
</feature>
<feature type="glycosylation site" description="N-linked (GlcNAc...) asparagine" evidence="3">
    <location>
        <position position="165"/>
    </location>
</feature>
<feature type="glycosylation site" description="N-linked (GlcNAc...) asparagine" evidence="3">
    <location>
        <position position="546"/>
    </location>
</feature>
<feature type="splice variant" id="VSP_000651" description="In isoform 1B." evidence="8 9">
    <original>KVYLCGQDEEH</original>
    <variation>ESIRGHTLIKN</variation>
    <location>
        <begin position="830"/>
        <end position="840"/>
    </location>
</feature>
<feature type="splice variant" id="VSP_000652" description="In isoform 1B." evidence="8 9">
    <location>
        <begin position="841"/>
        <end position="894"/>
    </location>
</feature>
<feature type="sequence variant" id="VAR_061059" description="In dbSNP:rs35338395.">
    <original>S</original>
    <variation>F</variation>
    <location>
        <position position="93"/>
    </location>
</feature>
<feature type="sequence variant" id="VAR_055579" description="In dbSNP:rs17800159.">
    <original>V</original>
    <variation>I</variation>
    <location>
        <position position="460"/>
    </location>
</feature>
<feature type="sequence variant" id="VAR_055580" description="In dbSNP:rs985861." evidence="7">
    <original>C</original>
    <variation>F</variation>
    <location>
        <position position="848"/>
    </location>
</feature>
<feature type="sequence conflict" description="In Ref. 1; CAA84278/CAA84279." evidence="10" ref="1">
    <original>S</original>
    <variation>T</variation>
    <location>
        <position position="132"/>
    </location>
</feature>
<feature type="strand" evidence="12">
    <location>
        <begin position="141"/>
        <end position="146"/>
    </location>
</feature>
<feature type="strand" evidence="12">
    <location>
        <begin position="150"/>
        <end position="157"/>
    </location>
</feature>
<feature type="helix" evidence="12">
    <location>
        <begin position="161"/>
        <end position="163"/>
    </location>
</feature>
<feature type="strand" evidence="12">
    <location>
        <begin position="164"/>
        <end position="166"/>
    </location>
</feature>
<feature type="strand" evidence="12">
    <location>
        <begin position="169"/>
        <end position="174"/>
    </location>
</feature>
<feature type="turn" evidence="12">
    <location>
        <begin position="175"/>
        <end position="178"/>
    </location>
</feature>
<feature type="strand" evidence="12">
    <location>
        <begin position="179"/>
        <end position="181"/>
    </location>
</feature>
<feature type="strand" evidence="12">
    <location>
        <begin position="184"/>
        <end position="187"/>
    </location>
</feature>
<feature type="turn" evidence="12">
    <location>
        <begin position="189"/>
        <end position="191"/>
    </location>
</feature>
<feature type="strand" evidence="12">
    <location>
        <begin position="193"/>
        <end position="196"/>
    </location>
</feature>
<feature type="turn" evidence="12">
    <location>
        <begin position="202"/>
        <end position="204"/>
    </location>
</feature>
<feature type="strand" evidence="12">
    <location>
        <begin position="206"/>
        <end position="215"/>
    </location>
</feature>
<feature type="strand" evidence="12">
    <location>
        <begin position="226"/>
        <end position="233"/>
    </location>
</feature>
<feature type="strand" evidence="12">
    <location>
        <begin position="241"/>
        <end position="252"/>
    </location>
</feature>
<feature type="strand" evidence="12">
    <location>
        <begin position="260"/>
        <end position="263"/>
    </location>
</feature>
<feature type="turn" evidence="12">
    <location>
        <begin position="275"/>
        <end position="277"/>
    </location>
</feature>
<feature type="strand" evidence="12">
    <location>
        <begin position="280"/>
        <end position="288"/>
    </location>
</feature>
<feature type="strand" evidence="12">
    <location>
        <begin position="294"/>
        <end position="296"/>
    </location>
</feature>
<feature type="turn" evidence="12">
    <location>
        <begin position="298"/>
        <end position="300"/>
    </location>
</feature>
<feature type="strand" evidence="12">
    <location>
        <begin position="302"/>
        <end position="306"/>
    </location>
</feature>
<feature type="turn" evidence="12">
    <location>
        <begin position="312"/>
        <end position="314"/>
    </location>
</feature>
<feature type="strand" evidence="12">
    <location>
        <begin position="316"/>
        <end position="325"/>
    </location>
</feature>
<feature type="helix" evidence="12">
    <location>
        <begin position="327"/>
        <end position="329"/>
    </location>
</feature>
<feature type="strand" evidence="12">
    <location>
        <begin position="335"/>
        <end position="345"/>
    </location>
</feature>
<feature type="strand" evidence="12">
    <location>
        <begin position="353"/>
        <end position="366"/>
    </location>
</feature>
<feature type="strand" evidence="12">
    <location>
        <begin position="369"/>
        <end position="375"/>
    </location>
</feature>
<feature type="strand" evidence="12">
    <location>
        <begin position="383"/>
        <end position="385"/>
    </location>
</feature>
<feature type="turn" evidence="12">
    <location>
        <begin position="386"/>
        <end position="388"/>
    </location>
</feature>
<feature type="strand" evidence="12">
    <location>
        <begin position="390"/>
        <end position="397"/>
    </location>
</feature>
<feature type="strand" evidence="12">
    <location>
        <begin position="399"/>
        <end position="401"/>
    </location>
</feature>
<feature type="strand" evidence="12">
    <location>
        <begin position="403"/>
        <end position="407"/>
    </location>
</feature>
<feature type="turn" evidence="12">
    <location>
        <begin position="409"/>
        <end position="411"/>
    </location>
</feature>
<feature type="strand" evidence="12">
    <location>
        <begin position="414"/>
        <end position="418"/>
    </location>
</feature>
<feature type="turn" evidence="12">
    <location>
        <begin position="424"/>
        <end position="426"/>
    </location>
</feature>
<feature type="strand" evidence="12">
    <location>
        <begin position="428"/>
        <end position="440"/>
    </location>
</feature>
<feature type="strand" evidence="12">
    <location>
        <begin position="444"/>
        <end position="450"/>
    </location>
</feature>
<feature type="strand" evidence="12">
    <location>
        <begin position="455"/>
        <end position="463"/>
    </location>
</feature>
<feature type="strand" evidence="12">
    <location>
        <begin position="472"/>
        <end position="481"/>
    </location>
</feature>
<feature type="strand" evidence="12">
    <location>
        <begin position="498"/>
        <end position="500"/>
    </location>
</feature>
<feature type="strand" evidence="12">
    <location>
        <begin position="518"/>
        <end position="520"/>
    </location>
</feature>
<feature type="turn" evidence="12">
    <location>
        <begin position="522"/>
        <end position="524"/>
    </location>
</feature>
<feature type="strand" evidence="12">
    <location>
        <begin position="527"/>
        <end position="529"/>
    </location>
</feature>
<feature type="strand" evidence="12">
    <location>
        <begin position="544"/>
        <end position="549"/>
    </location>
</feature>
<feature type="strand" evidence="12">
    <location>
        <begin position="554"/>
        <end position="556"/>
    </location>
</feature>
<feature type="strand" evidence="12">
    <location>
        <begin position="561"/>
        <end position="568"/>
    </location>
</feature>
<feature type="strand" evidence="12">
    <location>
        <begin position="585"/>
        <end position="587"/>
    </location>
</feature>
<feature type="strand" evidence="12">
    <location>
        <begin position="589"/>
        <end position="593"/>
    </location>
</feature>
<feature type="strand" evidence="12">
    <location>
        <begin position="608"/>
        <end position="611"/>
    </location>
</feature>
<feature type="turn" evidence="12">
    <location>
        <begin position="614"/>
        <end position="618"/>
    </location>
</feature>
<feature type="strand" evidence="12">
    <location>
        <begin position="619"/>
        <end position="622"/>
    </location>
</feature>
<feature type="strand" evidence="12">
    <location>
        <begin position="624"/>
        <end position="627"/>
    </location>
</feature>
<feature type="strand" evidence="12">
    <location>
        <begin position="629"/>
        <end position="633"/>
    </location>
</feature>
<feature type="strand" evidence="12">
    <location>
        <begin position="639"/>
        <end position="649"/>
    </location>
</feature>
<feature type="strand" evidence="12">
    <location>
        <begin position="655"/>
        <end position="664"/>
    </location>
</feature>
<keyword id="KW-0002">3D-structure</keyword>
<keyword id="KW-0025">Alternative splicing</keyword>
<keyword id="KW-0106">Calcium</keyword>
<keyword id="KW-0130">Cell adhesion</keyword>
<keyword id="KW-0965">Cell junction</keyword>
<keyword id="KW-1003">Cell membrane</keyword>
<keyword id="KW-0165">Cleavage on pair of basic residues</keyword>
<keyword id="KW-0903">Direct protein sequencing</keyword>
<keyword id="KW-0325">Glycoprotein</keyword>
<keyword id="KW-0472">Membrane</keyword>
<keyword id="KW-0479">Metal-binding</keyword>
<keyword id="KW-0597">Phosphoprotein</keyword>
<keyword id="KW-1267">Proteomics identification</keyword>
<keyword id="KW-1185">Reference proteome</keyword>
<keyword id="KW-0677">Repeat</keyword>
<keyword id="KW-0732">Signal</keyword>
<keyword id="KW-0812">Transmembrane</keyword>
<keyword id="KW-1133">Transmembrane helix</keyword>
<gene>
    <name type="primary">DSC1</name>
    <name type="synonym">CDHF1</name>
</gene>
<reference key="1">
    <citation type="journal article" date="1993" name="Int. J. Dev. Biol.">
        <title>Differential synthesis of type 1 and type 2 desmocollin mRNAs in human stratified epithelia.</title>
        <authorList>
            <person name="Theis D.G."/>
            <person name="Koch P.J."/>
            <person name="Franke W.W."/>
        </authorList>
    </citation>
    <scope>NUCLEOTIDE SEQUENCE [MRNA] (ISOFORMS 1A AND 1B)</scope>
    <scope>VARIANT PHE-848</scope>
    <source>
        <tissue>Foreskin</tissue>
    </source>
</reference>
<reference key="2">
    <citation type="journal article" date="1993" name="Genomics">
        <title>Cloning of the cDNA (DSC1) coding for human type 1 desmocollin and its assignment to chromosome 18.</title>
        <authorList>
            <person name="King I.A."/>
            <person name="Arnemann J."/>
            <person name="Spurr N.K."/>
            <person name="Buxton R.S."/>
        </authorList>
    </citation>
    <scope>NUCLEOTIDE SEQUENCE [MRNA] (ISOFORMS 1A AND 1B)</scope>
    <source>
        <tissue>Skin</tissue>
    </source>
</reference>
<reference key="3">
    <citation type="journal article" date="2000" name="Biochem. Biophys. Res. Commun.">
        <title>Genomic organization and amplification of the human desmosomal cadherin genes DSC1 and DSC3, encoding desmocollin types 1 and 3.</title>
        <authorList>
            <person name="Whittock N.V."/>
            <person name="Hunt D.M."/>
            <person name="Rickman L."/>
            <person name="Malhi S."/>
            <person name="Vogazianou A.P."/>
            <person name="Dawson L.F."/>
            <person name="Eady R.A.J."/>
            <person name="Buxton R.S."/>
            <person name="McGrath J.A."/>
        </authorList>
    </citation>
    <scope>NUCLEOTIDE SEQUENCE [GENOMIC DNA]</scope>
</reference>
<reference key="4">
    <citation type="submission" date="2005-07" db="EMBL/GenBank/DDBJ databases">
        <authorList>
            <person name="Mural R.J."/>
            <person name="Istrail S."/>
            <person name="Sutton G.G."/>
            <person name="Florea L."/>
            <person name="Halpern A.L."/>
            <person name="Mobarry C.M."/>
            <person name="Lippert R."/>
            <person name="Walenz B."/>
            <person name="Shatkay H."/>
            <person name="Dew I."/>
            <person name="Miller J.R."/>
            <person name="Flanigan M.J."/>
            <person name="Edwards N.J."/>
            <person name="Bolanos R."/>
            <person name="Fasulo D."/>
            <person name="Halldorsson B.V."/>
            <person name="Hannenhalli S."/>
            <person name="Turner R."/>
            <person name="Yooseph S."/>
            <person name="Lu F."/>
            <person name="Nusskern D.R."/>
            <person name="Shue B.C."/>
            <person name="Zheng X.H."/>
            <person name="Zhong F."/>
            <person name="Delcher A.L."/>
            <person name="Huson D.H."/>
            <person name="Kravitz S.A."/>
            <person name="Mouchard L."/>
            <person name="Reinert K."/>
            <person name="Remington K.A."/>
            <person name="Clark A.G."/>
            <person name="Waterman M.S."/>
            <person name="Eichler E.E."/>
            <person name="Adams M.D."/>
            <person name="Hunkapiller M.W."/>
            <person name="Myers E.W."/>
            <person name="Venter J.C."/>
        </authorList>
    </citation>
    <scope>NUCLEOTIDE SEQUENCE [LARGE SCALE GENOMIC DNA]</scope>
</reference>
<reference key="5">
    <citation type="journal article" date="1991" name="FEBS Lett.">
        <title>Keratinization is associated with the expression of a new protein related to the desmosomal cadherins DGII/III.</title>
        <authorList>
            <person name="King I.A."/>
            <person name="Magee A.I."/>
            <person name="Rees D.A."/>
            <person name="Buxton R.S."/>
        </authorList>
    </citation>
    <scope>PROTEIN SEQUENCE OF 135-151 AND 283-292</scope>
    <scope>SUBCELLULAR LOCATION</scope>
    <scope>TISSUE SPECIFICITY</scope>
</reference>
<reference key="6">
    <citation type="journal article" date="2007" name="Electrophoresis">
        <title>Toward a global characterization of the phosphoproteome in prostate cancer cells: identification of phosphoproteins in the LNCaP cell line.</title>
        <authorList>
            <person name="Giorgianni F."/>
            <person name="Zhao Y."/>
            <person name="Desiderio D.M."/>
            <person name="Beranova-Giorgianni S."/>
        </authorList>
    </citation>
    <scope>PHOSPHORYLATION [LARGE SCALE ANALYSIS] AT THR-385</scope>
    <scope>IDENTIFICATION BY MASS SPECTROMETRY [LARGE SCALE ANALYSIS]</scope>
    <source>
        <tissue>Prostate cancer</tissue>
    </source>
</reference>
<reference key="7">
    <citation type="journal article" date="2009" name="J. Biol. Chem.">
        <title>Interactions of plakoglobin and beta-catenin with desmosomal cadherins: basis of selective exclusion of alpha- and beta-catenin from desmosomes.</title>
        <authorList>
            <person name="Choi H.J."/>
            <person name="Gross J.C."/>
            <person name="Pokutta S."/>
            <person name="Weis W.I."/>
        </authorList>
    </citation>
    <scope>INTERACTION WITH JUP/PLAKOGLOBIN</scope>
</reference>
<reference key="8">
    <citation type="journal article" date="2011" name="BMC Syst. Biol.">
        <title>Initial characterization of the human central proteome.</title>
        <authorList>
            <person name="Burkard T.R."/>
            <person name="Planyavsky M."/>
            <person name="Kaupe I."/>
            <person name="Breitwieser F.P."/>
            <person name="Buerckstuemmer T."/>
            <person name="Bennett K.L."/>
            <person name="Superti-Furga G."/>
            <person name="Colinge J."/>
        </authorList>
    </citation>
    <scope>IDENTIFICATION BY MASS SPECTROMETRY [LARGE SCALE ANALYSIS]</scope>
</reference>
<name>DSC1_HUMAN</name>
<organism>
    <name type="scientific">Homo sapiens</name>
    <name type="common">Human</name>
    <dbReference type="NCBI Taxonomy" id="9606"/>
    <lineage>
        <taxon>Eukaryota</taxon>
        <taxon>Metazoa</taxon>
        <taxon>Chordata</taxon>
        <taxon>Craniata</taxon>
        <taxon>Vertebrata</taxon>
        <taxon>Euteleostomi</taxon>
        <taxon>Mammalia</taxon>
        <taxon>Eutheria</taxon>
        <taxon>Euarchontoglires</taxon>
        <taxon>Primates</taxon>
        <taxon>Haplorrhini</taxon>
        <taxon>Catarrhini</taxon>
        <taxon>Hominidae</taxon>
        <taxon>Homo</taxon>
    </lineage>
</organism>
<sequence>MALASAAPGSIFCKQLLFSLLVLTLLCDACQKVYLRVPSHLQAETLVGKVNLEECLKSASLIRSSDPAFRILEDGSIYTTHDLILSSERKSFSIFLSDGQRREQQEIKVVLSARENKSPKKRHTKDTALKRSKRRWAPIPASLMENSLGPFPQHVQQIQSDAAQNYTIFYSISGPGVDKEPFNLFYIEKDTGDIFCTRSIDREKYEQFALYGYATTADGYAPEYPLPLIIKIEDDNDNAPYFEHRVTIFTVPENCRSGTSVGKVTATDLDEPDTLHTRLKYKILQQIPDHPKHFSIHPDTGVITTTTPFLDREKCDTYQLIMEVRDMGGQPFGLFNTGTITISLEDENDNPPSFTETSYVTEVEENRIDVEILRMKVQDQDLPNTPHSKAVYKILQGNENGNFIISTDPNTNEGVLCVVKPLNYEVNRQVILQVGVINEAQFSKAASSQTPTMCTTTVTVKIIDSDEGPECHPPVKVIQSQDGFPAGQELLGYKALDPEISSGEGLRYQKLGDEDNWFEINQHTGDLRTLKVLDRESKFVKNNQYNISVVAVDAVGRSCTGTLVVHLDDYNDHAPQIDKEVTICQNNEDFAVLKPVDPDGPENGPPFQFFLDNSASKNWNIEEKDGKTAILRQRQNLDYNYYSVPIQIKDRHGLVATHMLTVRVCDCSTPSECRMKDKSTRDVRPNVILGRWAILAMVLGSVLLLCILFTCFCVTAKRTVKKCFPEDIAQQNLIVSNTEGPGEEVTEANIRLPMQTSNICDTSMSVGTVGGQGIKTQQSFEMVKGGYTLDSNKGGGHQTLESVKGVGQGDTGRYAYTDWQSFTQPRLGEKVYLCGQDEEHKHCEDYVCSYNYEGKGSLAGSVGCCSDRQEEEGLEFLDHLEPKFRTLAKTCIKK</sequence>
<comment type="function">
    <text evidence="2">A component of desmosome cell-cell junctions which are required for positive regulation of cellular adhesion (By similarity). Required for desmosome adhesion strength between the granular layers of the epidermis, as a result moderates epidermal proliferation and differentiation (By similarity). Is therefore required to maintain postnatal epidermal barrier function and normal hair follicle morphology into adulthood (By similarity).</text>
</comment>
<comment type="subunit">
    <text evidence="6">Binds to JUP/plakoglobin.</text>
</comment>
<comment type="interaction">
    <interactant intactId="EBI-2371346">
        <id>Q08554</id>
    </interactant>
    <interactant intactId="EBI-1045757">
        <id>Q02413</id>
        <label>DSG1</label>
    </interactant>
    <organismsDiffer>false</organismsDiffer>
    <experiments>2</experiments>
</comment>
<comment type="subcellular location">
    <subcellularLocation>
        <location evidence="5">Cell membrane</location>
        <topology evidence="3">Single-pass type I membrane protein</topology>
    </subcellularLocation>
    <subcellularLocation>
        <location evidence="2">Cell junction</location>
        <location evidence="2">Desmosome</location>
    </subcellularLocation>
</comment>
<comment type="alternative products">
    <event type="alternative splicing"/>
    <isoform>
        <id>Q08554-1</id>
        <name>1A</name>
        <name>DG2</name>
        <sequence type="displayed"/>
    </isoform>
    <isoform>
        <id>Q08554-2</id>
        <name>1B</name>
        <name>DG3</name>
        <sequence type="described" ref="VSP_000651 VSP_000652"/>
    </isoform>
</comment>
<comment type="tissue specificity">
    <text evidence="5">Strongly expressed in epidermis, less in lymph node and tongue.</text>
</comment>
<comment type="domain">
    <text evidence="10">Calcium may be bound by the cadherin-like repeats.</text>
</comment>
<comment type="domain">
    <text evidence="1">Three calcium ions are usually bound at the interface of each cadherin domain and rigidify the connections, imparting a strong curvature to the full-length ectodomain.</text>
</comment>